<keyword id="KW-0066">ATP synthesis</keyword>
<keyword id="KW-0997">Cell inner membrane</keyword>
<keyword id="KW-1003">Cell membrane</keyword>
<keyword id="KW-0138">CF(0)</keyword>
<keyword id="KW-0375">Hydrogen ion transport</keyword>
<keyword id="KW-0406">Ion transport</keyword>
<keyword id="KW-0472">Membrane</keyword>
<keyword id="KW-1185">Reference proteome</keyword>
<keyword id="KW-0812">Transmembrane</keyword>
<keyword id="KW-1133">Transmembrane helix</keyword>
<keyword id="KW-0813">Transport</keyword>
<proteinExistence type="inferred from homology"/>
<protein>
    <recommendedName>
        <fullName evidence="1">ATP synthase subunit b 1</fullName>
    </recommendedName>
    <alternativeName>
        <fullName evidence="1">ATP synthase F(0) sector subunit b 1</fullName>
    </alternativeName>
    <alternativeName>
        <fullName evidence="1">ATPase subunit I 1</fullName>
    </alternativeName>
    <alternativeName>
        <fullName evidence="1">F-type ATPase subunit b 1</fullName>
        <shortName evidence="1">F-ATPase subunit b 1</shortName>
    </alternativeName>
</protein>
<accession>Q92RM5</accession>
<feature type="chain" id="PRO_0000368713" description="ATP synthase subunit b 1">
    <location>
        <begin position="1"/>
        <end position="161"/>
    </location>
</feature>
<feature type="transmembrane region" description="Helical" evidence="1">
    <location>
        <begin position="3"/>
        <end position="23"/>
    </location>
</feature>
<comment type="function">
    <text evidence="1">F(1)F(0) ATP synthase produces ATP from ADP in the presence of a proton or sodium gradient. F-type ATPases consist of two structural domains, F(1) containing the extramembraneous catalytic core and F(0) containing the membrane proton channel, linked together by a central stalk and a peripheral stalk. During catalysis, ATP synthesis in the catalytic domain of F(1) is coupled via a rotary mechanism of the central stalk subunits to proton translocation.</text>
</comment>
<comment type="function">
    <text evidence="1">Component of the F(0) channel, it forms part of the peripheral stalk, linking F(1) to F(0).</text>
</comment>
<comment type="subunit">
    <text evidence="1">F-type ATPases have 2 components, F(1) - the catalytic core - and F(0) - the membrane proton channel. F(1) has five subunits: alpha(3), beta(3), gamma(1), delta(1), epsilon(1). F(0) has three main subunits: a(1), b(2) and c(10-14). The alpha and beta chains form an alternating ring which encloses part of the gamma chain. F(1) is attached to F(0) by a central stalk formed by the gamma and epsilon chains, while a peripheral stalk is formed by the delta and b chains.</text>
</comment>
<comment type="subcellular location">
    <subcellularLocation>
        <location evidence="1">Cell inner membrane</location>
        <topology evidence="1">Single-pass membrane protein</topology>
    </subcellularLocation>
</comment>
<comment type="similarity">
    <text evidence="1">Belongs to the ATPase B chain family.</text>
</comment>
<name>ATPF1_RHIME</name>
<organism>
    <name type="scientific">Rhizobium meliloti (strain 1021)</name>
    <name type="common">Ensifer meliloti</name>
    <name type="synonym">Sinorhizobium meliloti</name>
    <dbReference type="NCBI Taxonomy" id="266834"/>
    <lineage>
        <taxon>Bacteria</taxon>
        <taxon>Pseudomonadati</taxon>
        <taxon>Pseudomonadota</taxon>
        <taxon>Alphaproteobacteria</taxon>
        <taxon>Hyphomicrobiales</taxon>
        <taxon>Rhizobiaceae</taxon>
        <taxon>Sinorhizobium/Ensifer group</taxon>
        <taxon>Sinorhizobium</taxon>
    </lineage>
</organism>
<dbReference type="EMBL" id="AL591688">
    <property type="protein sequence ID" value="CAC45410.1"/>
    <property type="molecule type" value="Genomic_DNA"/>
</dbReference>
<dbReference type="RefSeq" id="NP_384944.1">
    <property type="nucleotide sequence ID" value="NC_003047.1"/>
</dbReference>
<dbReference type="RefSeq" id="WP_003533637.1">
    <property type="nucleotide sequence ID" value="NC_003047.1"/>
</dbReference>
<dbReference type="SMR" id="Q92RM5"/>
<dbReference type="EnsemblBacteria" id="CAC45410">
    <property type="protein sequence ID" value="CAC45410"/>
    <property type="gene ID" value="SMc00868"/>
</dbReference>
<dbReference type="KEGG" id="sme:SMc00868"/>
<dbReference type="PATRIC" id="fig|266834.11.peg.2230"/>
<dbReference type="eggNOG" id="COG0711">
    <property type="taxonomic scope" value="Bacteria"/>
</dbReference>
<dbReference type="HOGENOM" id="CLU_079215_6_1_5"/>
<dbReference type="OrthoDB" id="8479836at2"/>
<dbReference type="Proteomes" id="UP000001976">
    <property type="component" value="Chromosome"/>
</dbReference>
<dbReference type="GO" id="GO:0005886">
    <property type="term" value="C:plasma membrane"/>
    <property type="evidence" value="ECO:0007669"/>
    <property type="project" value="UniProtKB-SubCell"/>
</dbReference>
<dbReference type="GO" id="GO:0045259">
    <property type="term" value="C:proton-transporting ATP synthase complex"/>
    <property type="evidence" value="ECO:0007669"/>
    <property type="project" value="UniProtKB-KW"/>
</dbReference>
<dbReference type="GO" id="GO:0046933">
    <property type="term" value="F:proton-transporting ATP synthase activity, rotational mechanism"/>
    <property type="evidence" value="ECO:0007669"/>
    <property type="project" value="UniProtKB-UniRule"/>
</dbReference>
<dbReference type="GO" id="GO:0046961">
    <property type="term" value="F:proton-transporting ATPase activity, rotational mechanism"/>
    <property type="evidence" value="ECO:0007669"/>
    <property type="project" value="TreeGrafter"/>
</dbReference>
<dbReference type="CDD" id="cd06503">
    <property type="entry name" value="ATP-synt_Fo_b"/>
    <property type="match status" value="1"/>
</dbReference>
<dbReference type="HAMAP" id="MF_01398">
    <property type="entry name" value="ATP_synth_b_bprime"/>
    <property type="match status" value="1"/>
</dbReference>
<dbReference type="InterPro" id="IPR002146">
    <property type="entry name" value="ATP_synth_b/b'su_bac/chlpt"/>
</dbReference>
<dbReference type="InterPro" id="IPR050059">
    <property type="entry name" value="ATP_synthase_B_chain"/>
</dbReference>
<dbReference type="NCBIfam" id="NF006611">
    <property type="entry name" value="PRK09173.1"/>
    <property type="match status" value="1"/>
</dbReference>
<dbReference type="PANTHER" id="PTHR33445:SF1">
    <property type="entry name" value="ATP SYNTHASE SUBUNIT B"/>
    <property type="match status" value="1"/>
</dbReference>
<dbReference type="PANTHER" id="PTHR33445">
    <property type="entry name" value="ATP SYNTHASE SUBUNIT B', CHLOROPLASTIC"/>
    <property type="match status" value="1"/>
</dbReference>
<dbReference type="Pfam" id="PF00430">
    <property type="entry name" value="ATP-synt_B"/>
    <property type="match status" value="1"/>
</dbReference>
<gene>
    <name evidence="1" type="primary">atpF1</name>
    <name type="ordered locus">R00838</name>
    <name type="ORF">SMc00868</name>
</gene>
<reference key="1">
    <citation type="journal article" date="2001" name="Proc. Natl. Acad. Sci. U.S.A.">
        <title>Analysis of the chromosome sequence of the legume symbiont Sinorhizobium meliloti strain 1021.</title>
        <authorList>
            <person name="Capela D."/>
            <person name="Barloy-Hubler F."/>
            <person name="Gouzy J."/>
            <person name="Bothe G."/>
            <person name="Ampe F."/>
            <person name="Batut J."/>
            <person name="Boistard P."/>
            <person name="Becker A."/>
            <person name="Boutry M."/>
            <person name="Cadieu E."/>
            <person name="Dreano S."/>
            <person name="Gloux S."/>
            <person name="Godrie T."/>
            <person name="Goffeau A."/>
            <person name="Kahn D."/>
            <person name="Kiss E."/>
            <person name="Lelaure V."/>
            <person name="Masuy D."/>
            <person name="Pohl T."/>
            <person name="Portetelle D."/>
            <person name="Puehler A."/>
            <person name="Purnelle B."/>
            <person name="Ramsperger U."/>
            <person name="Renard C."/>
            <person name="Thebault P."/>
            <person name="Vandenbol M."/>
            <person name="Weidner S."/>
            <person name="Galibert F."/>
        </authorList>
    </citation>
    <scope>NUCLEOTIDE SEQUENCE [LARGE SCALE GENOMIC DNA]</scope>
    <source>
        <strain>1021</strain>
    </source>
</reference>
<reference key="2">
    <citation type="journal article" date="2001" name="Science">
        <title>The composite genome of the legume symbiont Sinorhizobium meliloti.</title>
        <authorList>
            <person name="Galibert F."/>
            <person name="Finan T.M."/>
            <person name="Long S.R."/>
            <person name="Puehler A."/>
            <person name="Abola P."/>
            <person name="Ampe F."/>
            <person name="Barloy-Hubler F."/>
            <person name="Barnett M.J."/>
            <person name="Becker A."/>
            <person name="Boistard P."/>
            <person name="Bothe G."/>
            <person name="Boutry M."/>
            <person name="Bowser L."/>
            <person name="Buhrmester J."/>
            <person name="Cadieu E."/>
            <person name="Capela D."/>
            <person name="Chain P."/>
            <person name="Cowie A."/>
            <person name="Davis R.W."/>
            <person name="Dreano S."/>
            <person name="Federspiel N.A."/>
            <person name="Fisher R.F."/>
            <person name="Gloux S."/>
            <person name="Godrie T."/>
            <person name="Goffeau A."/>
            <person name="Golding B."/>
            <person name="Gouzy J."/>
            <person name="Gurjal M."/>
            <person name="Hernandez-Lucas I."/>
            <person name="Hong A."/>
            <person name="Huizar L."/>
            <person name="Hyman R.W."/>
            <person name="Jones T."/>
            <person name="Kahn D."/>
            <person name="Kahn M.L."/>
            <person name="Kalman S."/>
            <person name="Keating D.H."/>
            <person name="Kiss E."/>
            <person name="Komp C."/>
            <person name="Lelaure V."/>
            <person name="Masuy D."/>
            <person name="Palm C."/>
            <person name="Peck M.C."/>
            <person name="Pohl T.M."/>
            <person name="Portetelle D."/>
            <person name="Purnelle B."/>
            <person name="Ramsperger U."/>
            <person name="Surzycki R."/>
            <person name="Thebault P."/>
            <person name="Vandenbol M."/>
            <person name="Vorhoelter F.J."/>
            <person name="Weidner S."/>
            <person name="Wells D.H."/>
            <person name="Wong K."/>
            <person name="Yeh K.-C."/>
            <person name="Batut J."/>
        </authorList>
    </citation>
    <scope>NUCLEOTIDE SEQUENCE [LARGE SCALE GENOMIC DNA]</scope>
    <source>
        <strain>1021</strain>
    </source>
</reference>
<evidence type="ECO:0000255" key="1">
    <source>
        <dbReference type="HAMAP-Rule" id="MF_01398"/>
    </source>
</evidence>
<sequence length="161" mass="17382">MALDATFYALVGLILFFVLIAYLKVPGMVGKALDARADKISNELAEAKRLREEAQSLVAEYQRKRKDAEAEAASIVAAAQREAEMLTAEAKQKTEEYVARRTALSEQKIKQAESDAINAVRAAAVDLAISAAEKVLASKADAGAQETLFKKAIGEVKARLN</sequence>